<reference key="1">
    <citation type="journal article" date="1999" name="Nature">
        <title>Sequence and analysis of chromosome 2 of the plant Arabidopsis thaliana.</title>
        <authorList>
            <person name="Lin X."/>
            <person name="Kaul S."/>
            <person name="Rounsley S.D."/>
            <person name="Shea T.P."/>
            <person name="Benito M.-I."/>
            <person name="Town C.D."/>
            <person name="Fujii C.Y."/>
            <person name="Mason T.M."/>
            <person name="Bowman C.L."/>
            <person name="Barnstead M.E."/>
            <person name="Feldblyum T.V."/>
            <person name="Buell C.R."/>
            <person name="Ketchum K.A."/>
            <person name="Lee J.J."/>
            <person name="Ronning C.M."/>
            <person name="Koo H.L."/>
            <person name="Moffat K.S."/>
            <person name="Cronin L.A."/>
            <person name="Shen M."/>
            <person name="Pai G."/>
            <person name="Van Aken S."/>
            <person name="Umayam L."/>
            <person name="Tallon L.J."/>
            <person name="Gill J.E."/>
            <person name="Adams M.D."/>
            <person name="Carrera A.J."/>
            <person name="Creasy T.H."/>
            <person name="Goodman H.M."/>
            <person name="Somerville C.R."/>
            <person name="Copenhaver G.P."/>
            <person name="Preuss D."/>
            <person name="Nierman W.C."/>
            <person name="White O."/>
            <person name="Eisen J.A."/>
            <person name="Salzberg S.L."/>
            <person name="Fraser C.M."/>
            <person name="Venter J.C."/>
        </authorList>
    </citation>
    <scope>NUCLEOTIDE SEQUENCE [LARGE SCALE GENOMIC DNA]</scope>
    <source>
        <strain>cv. Columbia</strain>
    </source>
</reference>
<reference key="2">
    <citation type="journal article" date="2017" name="Plant J.">
        <title>Araport11: a complete reannotation of the Arabidopsis thaliana reference genome.</title>
        <authorList>
            <person name="Cheng C.Y."/>
            <person name="Krishnakumar V."/>
            <person name="Chan A.P."/>
            <person name="Thibaud-Nissen F."/>
            <person name="Schobel S."/>
            <person name="Town C.D."/>
        </authorList>
    </citation>
    <scope>GENOME REANNOTATION</scope>
    <source>
        <strain>cv. Columbia</strain>
    </source>
</reference>
<reference key="3">
    <citation type="journal article" date="2005" name="Plant Physiol.">
        <title>Genome organization of more than 300 defensin-like genes in Arabidopsis.</title>
        <authorList>
            <person name="Silverstein K.A.T."/>
            <person name="Graham M.A."/>
            <person name="Paape T.D."/>
            <person name="VandenBosch K.A."/>
        </authorList>
    </citation>
    <scope>GENE FAMILY</scope>
</reference>
<feature type="signal peptide" evidence="2">
    <location>
        <begin position="1"/>
        <end position="19"/>
    </location>
</feature>
<feature type="chain" id="PRO_0000379635" description="Putative defensin-like protein 55">
    <location>
        <begin position="20"/>
        <end position="75"/>
    </location>
</feature>
<feature type="disulfide bond" evidence="1">
    <location>
        <begin position="39"/>
        <end position="73"/>
    </location>
</feature>
<feature type="disulfide bond" evidence="1">
    <location>
        <begin position="43"/>
        <end position="66"/>
    </location>
</feature>
<feature type="disulfide bond" evidence="1">
    <location>
        <begin position="52"/>
        <end position="71"/>
    </location>
</feature>
<feature type="disulfide bond" evidence="1">
    <location>
        <begin position="56"/>
        <end position="72"/>
    </location>
</feature>
<accession>Q2V2Q4</accession>
<evidence type="ECO:0000250" key="1"/>
<evidence type="ECO:0000255" key="2"/>
<evidence type="ECO:0000305" key="3"/>
<dbReference type="EMBL" id="AC007167">
    <property type="status" value="NOT_ANNOTATED_CDS"/>
    <property type="molecule type" value="Genomic_DNA"/>
</dbReference>
<dbReference type="EMBL" id="CP002685">
    <property type="protein sequence ID" value="AEC05768.1"/>
    <property type="molecule type" value="Genomic_DNA"/>
</dbReference>
<dbReference type="RefSeq" id="NP_001031309.1">
    <property type="nucleotide sequence ID" value="NM_001036232.1"/>
</dbReference>
<dbReference type="SMR" id="Q2V2Q4"/>
<dbReference type="PaxDb" id="3702-AT2G03931.1"/>
<dbReference type="EnsemblPlants" id="AT2G03931.1">
    <property type="protein sequence ID" value="AT2G03931.1"/>
    <property type="gene ID" value="AT2G03931"/>
</dbReference>
<dbReference type="GeneID" id="3768142"/>
<dbReference type="Gramene" id="AT2G03931.1">
    <property type="protein sequence ID" value="AT2G03931.1"/>
    <property type="gene ID" value="AT2G03931"/>
</dbReference>
<dbReference type="KEGG" id="ath:AT2G03931"/>
<dbReference type="Araport" id="AT2G03931"/>
<dbReference type="TAIR" id="AT2G03931"/>
<dbReference type="HOGENOM" id="CLU_165205_2_0_1"/>
<dbReference type="InParanoid" id="Q2V2Q4"/>
<dbReference type="OMA" id="QIHICYK"/>
<dbReference type="PhylomeDB" id="Q2V2Q4"/>
<dbReference type="PRO" id="PR:Q2V2Q4"/>
<dbReference type="Proteomes" id="UP000006548">
    <property type="component" value="Chromosome 2"/>
</dbReference>
<dbReference type="ExpressionAtlas" id="Q2V2Q4">
    <property type="expression patterns" value="baseline"/>
</dbReference>
<dbReference type="GO" id="GO:0005576">
    <property type="term" value="C:extracellular region"/>
    <property type="evidence" value="ECO:0007669"/>
    <property type="project" value="UniProtKB-SubCell"/>
</dbReference>
<dbReference type="GO" id="GO:0050832">
    <property type="term" value="P:defense response to fungus"/>
    <property type="evidence" value="ECO:0007669"/>
    <property type="project" value="UniProtKB-KW"/>
</dbReference>
<dbReference type="GO" id="GO:0031640">
    <property type="term" value="P:killing of cells of another organism"/>
    <property type="evidence" value="ECO:0007669"/>
    <property type="project" value="UniProtKB-KW"/>
</dbReference>
<dbReference type="InterPro" id="IPR056373">
    <property type="entry name" value="Defensin-like_dom"/>
</dbReference>
<dbReference type="Pfam" id="PF24552">
    <property type="entry name" value="Defensin"/>
    <property type="match status" value="1"/>
</dbReference>
<name>DEF55_ARATH</name>
<comment type="subcellular location">
    <subcellularLocation>
        <location evidence="1">Secreted</location>
    </subcellularLocation>
</comment>
<comment type="similarity">
    <text evidence="3">Belongs to the DEFL family.</text>
</comment>
<sequence length="75" mass="8402">MNITKAYVIFFLVVILTNSLSNSDALASSVIETTKNDVCSTPCTIRYGTFECFQDCILDHFRDGNCINGRCCCKY</sequence>
<protein>
    <recommendedName>
        <fullName>Putative defensin-like protein 55</fullName>
    </recommendedName>
</protein>
<organism>
    <name type="scientific">Arabidopsis thaliana</name>
    <name type="common">Mouse-ear cress</name>
    <dbReference type="NCBI Taxonomy" id="3702"/>
    <lineage>
        <taxon>Eukaryota</taxon>
        <taxon>Viridiplantae</taxon>
        <taxon>Streptophyta</taxon>
        <taxon>Embryophyta</taxon>
        <taxon>Tracheophyta</taxon>
        <taxon>Spermatophyta</taxon>
        <taxon>Magnoliopsida</taxon>
        <taxon>eudicotyledons</taxon>
        <taxon>Gunneridae</taxon>
        <taxon>Pentapetalae</taxon>
        <taxon>rosids</taxon>
        <taxon>malvids</taxon>
        <taxon>Brassicales</taxon>
        <taxon>Brassicaceae</taxon>
        <taxon>Camelineae</taxon>
        <taxon>Arabidopsis</taxon>
    </lineage>
</organism>
<keyword id="KW-0929">Antimicrobial</keyword>
<keyword id="KW-1015">Disulfide bond</keyword>
<keyword id="KW-0295">Fungicide</keyword>
<keyword id="KW-0611">Plant defense</keyword>
<keyword id="KW-1185">Reference proteome</keyword>
<keyword id="KW-0964">Secreted</keyword>
<keyword id="KW-0732">Signal</keyword>
<gene>
    <name type="ordered locus">At2g03931</name>
    <name type="ORF">F3C11</name>
</gene>
<proteinExistence type="inferred from homology"/>